<sequence length="151" mass="17496">MAVERIVISTGKRKRAIARAVIRPGRGRVWINGVPLEIYPIEMARIKMMEPLLIAGEGVRSLVDIRVRVEGGGVMGQADAVRMAIARGLVEFFRCEESDDELCRMMDKISRDLRTAFLEHDRTMLVGDPRRTEPEKYMRYSARRRWQKSYR</sequence>
<name>RS9_AERPE</name>
<dbReference type="EMBL" id="BA000002">
    <property type="protein sequence ID" value="BAA80750.1"/>
    <property type="status" value="ALT_INIT"/>
    <property type="molecule type" value="Genomic_DNA"/>
</dbReference>
<dbReference type="PIR" id="A72558">
    <property type="entry name" value="A72558"/>
</dbReference>
<dbReference type="RefSeq" id="WP_148679311.1">
    <property type="nucleotide sequence ID" value="NC_000854.2"/>
</dbReference>
<dbReference type="SMR" id="Q9YB48"/>
<dbReference type="STRING" id="272557.APE_1749"/>
<dbReference type="EnsemblBacteria" id="BAA80750">
    <property type="protein sequence ID" value="BAA80750"/>
    <property type="gene ID" value="APE_1749"/>
</dbReference>
<dbReference type="GeneID" id="1446215"/>
<dbReference type="KEGG" id="ape:APE_1749"/>
<dbReference type="PATRIC" id="fig|272557.25.peg.1175"/>
<dbReference type="eggNOG" id="arCOG04243">
    <property type="taxonomic scope" value="Archaea"/>
</dbReference>
<dbReference type="Proteomes" id="UP000002518">
    <property type="component" value="Chromosome"/>
</dbReference>
<dbReference type="GO" id="GO:0022627">
    <property type="term" value="C:cytosolic small ribosomal subunit"/>
    <property type="evidence" value="ECO:0007669"/>
    <property type="project" value="TreeGrafter"/>
</dbReference>
<dbReference type="GO" id="GO:0003723">
    <property type="term" value="F:RNA binding"/>
    <property type="evidence" value="ECO:0007669"/>
    <property type="project" value="TreeGrafter"/>
</dbReference>
<dbReference type="GO" id="GO:0003735">
    <property type="term" value="F:structural constituent of ribosome"/>
    <property type="evidence" value="ECO:0007669"/>
    <property type="project" value="InterPro"/>
</dbReference>
<dbReference type="GO" id="GO:0000462">
    <property type="term" value="P:maturation of SSU-rRNA from tricistronic rRNA transcript (SSU-rRNA, 5.8S rRNA, LSU-rRNA)"/>
    <property type="evidence" value="ECO:0007669"/>
    <property type="project" value="TreeGrafter"/>
</dbReference>
<dbReference type="GO" id="GO:0006412">
    <property type="term" value="P:translation"/>
    <property type="evidence" value="ECO:0007669"/>
    <property type="project" value="UniProtKB-UniRule"/>
</dbReference>
<dbReference type="Gene3D" id="3.30.230.10">
    <property type="match status" value="1"/>
</dbReference>
<dbReference type="HAMAP" id="MF_00532_A">
    <property type="entry name" value="Ribosomal_uS9_A"/>
    <property type="match status" value="1"/>
</dbReference>
<dbReference type="InterPro" id="IPR020568">
    <property type="entry name" value="Ribosomal_Su5_D2-typ_SF"/>
</dbReference>
<dbReference type="InterPro" id="IPR000754">
    <property type="entry name" value="Ribosomal_uS9"/>
</dbReference>
<dbReference type="InterPro" id="IPR019958">
    <property type="entry name" value="Ribosomal_uS9_archaeal"/>
</dbReference>
<dbReference type="InterPro" id="IPR020574">
    <property type="entry name" value="Ribosomal_uS9_CS"/>
</dbReference>
<dbReference type="InterPro" id="IPR014721">
    <property type="entry name" value="Ribsml_uS5_D2-typ_fold_subgr"/>
</dbReference>
<dbReference type="NCBIfam" id="NF001749">
    <property type="entry name" value="PRK00474.1"/>
    <property type="match status" value="1"/>
</dbReference>
<dbReference type="NCBIfam" id="TIGR03627">
    <property type="entry name" value="uS9_arch"/>
    <property type="match status" value="1"/>
</dbReference>
<dbReference type="PANTHER" id="PTHR21569:SF16">
    <property type="entry name" value="RIBOSOMAL PROTEIN S16"/>
    <property type="match status" value="1"/>
</dbReference>
<dbReference type="PANTHER" id="PTHR21569">
    <property type="entry name" value="RIBOSOMAL PROTEIN S9"/>
    <property type="match status" value="1"/>
</dbReference>
<dbReference type="Pfam" id="PF00380">
    <property type="entry name" value="Ribosomal_S9"/>
    <property type="match status" value="1"/>
</dbReference>
<dbReference type="SUPFAM" id="SSF54211">
    <property type="entry name" value="Ribosomal protein S5 domain 2-like"/>
    <property type="match status" value="1"/>
</dbReference>
<dbReference type="PROSITE" id="PS00360">
    <property type="entry name" value="RIBOSOMAL_S9"/>
    <property type="match status" value="1"/>
</dbReference>
<accession>Q9YB48</accession>
<proteinExistence type="inferred from homology"/>
<gene>
    <name type="primary">rps9</name>
    <name type="ordered locus">APE_1749</name>
</gene>
<evidence type="ECO:0000305" key="1"/>
<feature type="chain" id="PRO_0000111460" description="Small ribosomal subunit protein uS9">
    <location>
        <begin position="1"/>
        <end position="151"/>
    </location>
</feature>
<reference key="1">
    <citation type="journal article" date="1999" name="DNA Res.">
        <title>Complete genome sequence of an aerobic hyper-thermophilic crenarchaeon, Aeropyrum pernix K1.</title>
        <authorList>
            <person name="Kawarabayasi Y."/>
            <person name="Hino Y."/>
            <person name="Horikawa H."/>
            <person name="Yamazaki S."/>
            <person name="Haikawa Y."/>
            <person name="Jin-no K."/>
            <person name="Takahashi M."/>
            <person name="Sekine M."/>
            <person name="Baba S."/>
            <person name="Ankai A."/>
            <person name="Kosugi H."/>
            <person name="Hosoyama A."/>
            <person name="Fukui S."/>
            <person name="Nagai Y."/>
            <person name="Nishijima K."/>
            <person name="Nakazawa H."/>
            <person name="Takamiya M."/>
            <person name="Masuda S."/>
            <person name="Funahashi T."/>
            <person name="Tanaka T."/>
            <person name="Kudoh Y."/>
            <person name="Yamazaki J."/>
            <person name="Kushida N."/>
            <person name="Oguchi A."/>
            <person name="Aoki K."/>
            <person name="Kubota K."/>
            <person name="Nakamura Y."/>
            <person name="Nomura N."/>
            <person name="Sako Y."/>
            <person name="Kikuchi H."/>
        </authorList>
    </citation>
    <scope>NUCLEOTIDE SEQUENCE [LARGE SCALE GENOMIC DNA]</scope>
    <source>
        <strain>ATCC 700893 / DSM 11879 / JCM 9820 / NBRC 100138 / K1</strain>
    </source>
</reference>
<comment type="similarity">
    <text evidence="1">Belongs to the universal ribosomal protein uS9 family.</text>
</comment>
<comment type="sequence caution" evidence="1">
    <conflict type="erroneous initiation">
        <sequence resource="EMBL-CDS" id="BAA80750"/>
    </conflict>
    <text>Extended N-terminus.</text>
</comment>
<organism>
    <name type="scientific">Aeropyrum pernix (strain ATCC 700893 / DSM 11879 / JCM 9820 / NBRC 100138 / K1)</name>
    <dbReference type="NCBI Taxonomy" id="272557"/>
    <lineage>
        <taxon>Archaea</taxon>
        <taxon>Thermoproteota</taxon>
        <taxon>Thermoprotei</taxon>
        <taxon>Desulfurococcales</taxon>
        <taxon>Desulfurococcaceae</taxon>
        <taxon>Aeropyrum</taxon>
    </lineage>
</organism>
<protein>
    <recommendedName>
        <fullName evidence="1">Small ribosomal subunit protein uS9</fullName>
    </recommendedName>
    <alternativeName>
        <fullName>30S ribosomal protein S9</fullName>
    </alternativeName>
</protein>
<keyword id="KW-1185">Reference proteome</keyword>
<keyword id="KW-0687">Ribonucleoprotein</keyword>
<keyword id="KW-0689">Ribosomal protein</keyword>